<gene>
    <name evidence="1" type="primary">mscL</name>
    <name type="ordered locus">Cbei_4961</name>
</gene>
<organism>
    <name type="scientific">Clostridium beijerinckii (strain ATCC 51743 / NCIMB 8052)</name>
    <name type="common">Clostridium acetobutylicum</name>
    <dbReference type="NCBI Taxonomy" id="290402"/>
    <lineage>
        <taxon>Bacteria</taxon>
        <taxon>Bacillati</taxon>
        <taxon>Bacillota</taxon>
        <taxon>Clostridia</taxon>
        <taxon>Eubacteriales</taxon>
        <taxon>Clostridiaceae</taxon>
        <taxon>Clostridium</taxon>
    </lineage>
</organism>
<name>MSCL_CLOB8</name>
<reference key="1">
    <citation type="submission" date="2007-06" db="EMBL/GenBank/DDBJ databases">
        <title>Complete sequence of Clostridium beijerinckii NCIMB 8052.</title>
        <authorList>
            <consortium name="US DOE Joint Genome Institute"/>
            <person name="Copeland A."/>
            <person name="Lucas S."/>
            <person name="Lapidus A."/>
            <person name="Barry K."/>
            <person name="Detter J.C."/>
            <person name="Glavina del Rio T."/>
            <person name="Hammon N."/>
            <person name="Israni S."/>
            <person name="Dalin E."/>
            <person name="Tice H."/>
            <person name="Pitluck S."/>
            <person name="Sims D."/>
            <person name="Brettin T."/>
            <person name="Bruce D."/>
            <person name="Tapia R."/>
            <person name="Brainard J."/>
            <person name="Schmutz J."/>
            <person name="Larimer F."/>
            <person name="Land M."/>
            <person name="Hauser L."/>
            <person name="Kyrpides N."/>
            <person name="Mikhailova N."/>
            <person name="Bennet G."/>
            <person name="Cann I."/>
            <person name="Chen J.-S."/>
            <person name="Contreras A.L."/>
            <person name="Jones D."/>
            <person name="Kashket E."/>
            <person name="Mitchell W."/>
            <person name="Stoddard S."/>
            <person name="Schwarz W."/>
            <person name="Qureshi N."/>
            <person name="Young M."/>
            <person name="Shi Z."/>
            <person name="Ezeji T."/>
            <person name="White B."/>
            <person name="Blaschek H."/>
            <person name="Richardson P."/>
        </authorList>
    </citation>
    <scope>NUCLEOTIDE SEQUENCE [LARGE SCALE GENOMIC DNA]</scope>
    <source>
        <strain>ATCC 51743 / NCIMB 8052</strain>
    </source>
</reference>
<protein>
    <recommendedName>
        <fullName evidence="1">Large-conductance mechanosensitive channel</fullName>
    </recommendedName>
</protein>
<sequence>MFKEFKEFAMKGNMVSLAIGVVIGGAFSKIVTSLVNDIIMPLVGLLMGRVDFSNLFFTLGSGNFKTVQEAKDAGVATVNYGIFINNIIDFLIVAFSIFIIIQQISKLTKKKGENIVPDKKKCKYCYTEINSQATRCPNCTSELKEN</sequence>
<accession>A6M387</accession>
<comment type="function">
    <text evidence="1">Channel that opens in response to stretch forces in the membrane lipid bilayer. May participate in the regulation of osmotic pressure changes within the cell.</text>
</comment>
<comment type="subunit">
    <text evidence="1">Homopentamer.</text>
</comment>
<comment type="subcellular location">
    <subcellularLocation>
        <location evidence="1">Cell membrane</location>
        <topology evidence="1">Multi-pass membrane protein</topology>
    </subcellularLocation>
</comment>
<comment type="similarity">
    <text evidence="1">Belongs to the MscL family.</text>
</comment>
<proteinExistence type="inferred from homology"/>
<dbReference type="EMBL" id="CP000721">
    <property type="protein sequence ID" value="ABR37067.1"/>
    <property type="molecule type" value="Genomic_DNA"/>
</dbReference>
<dbReference type="RefSeq" id="WP_012061111.1">
    <property type="nucleotide sequence ID" value="NC_009617.1"/>
</dbReference>
<dbReference type="SMR" id="A6M387"/>
<dbReference type="GeneID" id="66347865"/>
<dbReference type="KEGG" id="cbe:Cbei_4961"/>
<dbReference type="eggNOG" id="COG1970">
    <property type="taxonomic scope" value="Bacteria"/>
</dbReference>
<dbReference type="HOGENOM" id="CLU_095787_2_3_9"/>
<dbReference type="Proteomes" id="UP000000565">
    <property type="component" value="Chromosome"/>
</dbReference>
<dbReference type="GO" id="GO:0005886">
    <property type="term" value="C:plasma membrane"/>
    <property type="evidence" value="ECO:0007669"/>
    <property type="project" value="UniProtKB-SubCell"/>
</dbReference>
<dbReference type="GO" id="GO:0008381">
    <property type="term" value="F:mechanosensitive monoatomic ion channel activity"/>
    <property type="evidence" value="ECO:0007669"/>
    <property type="project" value="UniProtKB-UniRule"/>
</dbReference>
<dbReference type="Gene3D" id="1.10.1200.120">
    <property type="entry name" value="Large-conductance mechanosensitive channel, MscL, domain 1"/>
    <property type="match status" value="1"/>
</dbReference>
<dbReference type="HAMAP" id="MF_00115">
    <property type="entry name" value="MscL"/>
    <property type="match status" value="1"/>
</dbReference>
<dbReference type="InterPro" id="IPR001185">
    <property type="entry name" value="MS_channel"/>
</dbReference>
<dbReference type="InterPro" id="IPR037673">
    <property type="entry name" value="MSC/AndL"/>
</dbReference>
<dbReference type="InterPro" id="IPR036019">
    <property type="entry name" value="MscL_channel"/>
</dbReference>
<dbReference type="NCBIfam" id="TIGR00220">
    <property type="entry name" value="mscL"/>
    <property type="match status" value="1"/>
</dbReference>
<dbReference type="PANTHER" id="PTHR30266:SF2">
    <property type="entry name" value="LARGE-CONDUCTANCE MECHANOSENSITIVE CHANNEL"/>
    <property type="match status" value="1"/>
</dbReference>
<dbReference type="PANTHER" id="PTHR30266">
    <property type="entry name" value="MECHANOSENSITIVE CHANNEL MSCL"/>
    <property type="match status" value="1"/>
</dbReference>
<dbReference type="Pfam" id="PF01741">
    <property type="entry name" value="MscL"/>
    <property type="match status" value="1"/>
</dbReference>
<dbReference type="PRINTS" id="PR01264">
    <property type="entry name" value="MECHCHANNEL"/>
</dbReference>
<dbReference type="SUPFAM" id="SSF81330">
    <property type="entry name" value="Gated mechanosensitive channel"/>
    <property type="match status" value="1"/>
</dbReference>
<feature type="chain" id="PRO_1000076037" description="Large-conductance mechanosensitive channel">
    <location>
        <begin position="1"/>
        <end position="146"/>
    </location>
</feature>
<feature type="transmembrane region" description="Helical" evidence="1">
    <location>
        <begin position="15"/>
        <end position="35"/>
    </location>
</feature>
<feature type="transmembrane region" description="Helical" evidence="1">
    <location>
        <begin position="81"/>
        <end position="101"/>
    </location>
</feature>
<evidence type="ECO:0000255" key="1">
    <source>
        <dbReference type="HAMAP-Rule" id="MF_00115"/>
    </source>
</evidence>
<keyword id="KW-1003">Cell membrane</keyword>
<keyword id="KW-0407">Ion channel</keyword>
<keyword id="KW-0406">Ion transport</keyword>
<keyword id="KW-0472">Membrane</keyword>
<keyword id="KW-0812">Transmembrane</keyword>
<keyword id="KW-1133">Transmembrane helix</keyword>
<keyword id="KW-0813">Transport</keyword>